<evidence type="ECO:0000255" key="1">
    <source>
        <dbReference type="HAMAP-Rule" id="MF_00740"/>
    </source>
</evidence>
<protein>
    <recommendedName>
        <fullName evidence="1">Phosphopentomutase</fullName>
        <ecNumber evidence="1">5.4.2.7</ecNumber>
    </recommendedName>
    <alternativeName>
        <fullName evidence="1">Phosphodeoxyribomutase</fullName>
    </alternativeName>
</protein>
<organism>
    <name type="scientific">Staphylococcus aureus (strain JH1)</name>
    <dbReference type="NCBI Taxonomy" id="359787"/>
    <lineage>
        <taxon>Bacteria</taxon>
        <taxon>Bacillati</taxon>
        <taxon>Bacillota</taxon>
        <taxon>Bacilli</taxon>
        <taxon>Bacillales</taxon>
        <taxon>Staphylococcaceae</taxon>
        <taxon>Staphylococcus</taxon>
    </lineage>
</organism>
<accession>A6TXS4</accession>
<keyword id="KW-0963">Cytoplasm</keyword>
<keyword id="KW-0413">Isomerase</keyword>
<keyword id="KW-0464">Manganese</keyword>
<keyword id="KW-0479">Metal-binding</keyword>
<dbReference type="EC" id="5.4.2.7" evidence="1"/>
<dbReference type="EMBL" id="CP000736">
    <property type="protein sequence ID" value="ABR50992.1"/>
    <property type="molecule type" value="Genomic_DNA"/>
</dbReference>
<dbReference type="SMR" id="A6TXS4"/>
<dbReference type="KEGG" id="sah:SaurJH1_0130"/>
<dbReference type="HOGENOM" id="CLU_053861_0_0_9"/>
<dbReference type="UniPathway" id="UPA00002">
    <property type="reaction ID" value="UER00467"/>
</dbReference>
<dbReference type="GO" id="GO:0005829">
    <property type="term" value="C:cytosol"/>
    <property type="evidence" value="ECO:0007669"/>
    <property type="project" value="TreeGrafter"/>
</dbReference>
<dbReference type="GO" id="GO:0000287">
    <property type="term" value="F:magnesium ion binding"/>
    <property type="evidence" value="ECO:0007669"/>
    <property type="project" value="InterPro"/>
</dbReference>
<dbReference type="GO" id="GO:0030145">
    <property type="term" value="F:manganese ion binding"/>
    <property type="evidence" value="ECO:0007669"/>
    <property type="project" value="UniProtKB-UniRule"/>
</dbReference>
<dbReference type="GO" id="GO:0008973">
    <property type="term" value="F:phosphopentomutase activity"/>
    <property type="evidence" value="ECO:0007669"/>
    <property type="project" value="UniProtKB-UniRule"/>
</dbReference>
<dbReference type="GO" id="GO:0006018">
    <property type="term" value="P:2-deoxyribose 1-phosphate catabolic process"/>
    <property type="evidence" value="ECO:0007669"/>
    <property type="project" value="UniProtKB-UniRule"/>
</dbReference>
<dbReference type="GO" id="GO:0006015">
    <property type="term" value="P:5-phosphoribose 1-diphosphate biosynthetic process"/>
    <property type="evidence" value="ECO:0007669"/>
    <property type="project" value="UniProtKB-UniPathway"/>
</dbReference>
<dbReference type="GO" id="GO:0043094">
    <property type="term" value="P:metabolic compound salvage"/>
    <property type="evidence" value="ECO:0007669"/>
    <property type="project" value="InterPro"/>
</dbReference>
<dbReference type="GO" id="GO:0009117">
    <property type="term" value="P:nucleotide metabolic process"/>
    <property type="evidence" value="ECO:0007669"/>
    <property type="project" value="InterPro"/>
</dbReference>
<dbReference type="CDD" id="cd16009">
    <property type="entry name" value="PPM"/>
    <property type="match status" value="1"/>
</dbReference>
<dbReference type="FunFam" id="3.30.70.1250:FF:000001">
    <property type="entry name" value="Phosphopentomutase"/>
    <property type="match status" value="1"/>
</dbReference>
<dbReference type="Gene3D" id="3.40.720.10">
    <property type="entry name" value="Alkaline Phosphatase, subunit A"/>
    <property type="match status" value="1"/>
</dbReference>
<dbReference type="Gene3D" id="3.30.70.1250">
    <property type="entry name" value="Phosphopentomutase"/>
    <property type="match status" value="1"/>
</dbReference>
<dbReference type="HAMAP" id="MF_00740">
    <property type="entry name" value="Phosphopentomut"/>
    <property type="match status" value="1"/>
</dbReference>
<dbReference type="InterPro" id="IPR017850">
    <property type="entry name" value="Alkaline_phosphatase_core_sf"/>
</dbReference>
<dbReference type="InterPro" id="IPR010045">
    <property type="entry name" value="DeoB"/>
</dbReference>
<dbReference type="InterPro" id="IPR006124">
    <property type="entry name" value="Metalloenzyme"/>
</dbReference>
<dbReference type="InterPro" id="IPR024052">
    <property type="entry name" value="Phosphopentomutase_DeoB_cap_sf"/>
</dbReference>
<dbReference type="NCBIfam" id="TIGR01696">
    <property type="entry name" value="deoB"/>
    <property type="match status" value="1"/>
</dbReference>
<dbReference type="NCBIfam" id="NF003766">
    <property type="entry name" value="PRK05362.1"/>
    <property type="match status" value="1"/>
</dbReference>
<dbReference type="PANTHER" id="PTHR21110">
    <property type="entry name" value="PHOSPHOPENTOMUTASE"/>
    <property type="match status" value="1"/>
</dbReference>
<dbReference type="PANTHER" id="PTHR21110:SF0">
    <property type="entry name" value="PHOSPHOPENTOMUTASE"/>
    <property type="match status" value="1"/>
</dbReference>
<dbReference type="Pfam" id="PF01676">
    <property type="entry name" value="Metalloenzyme"/>
    <property type="match status" value="1"/>
</dbReference>
<dbReference type="PIRSF" id="PIRSF001491">
    <property type="entry name" value="Ppentomutase"/>
    <property type="match status" value="1"/>
</dbReference>
<dbReference type="SUPFAM" id="SSF53649">
    <property type="entry name" value="Alkaline phosphatase-like"/>
    <property type="match status" value="1"/>
</dbReference>
<dbReference type="SUPFAM" id="SSF143856">
    <property type="entry name" value="DeoB insert domain-like"/>
    <property type="match status" value="1"/>
</dbReference>
<feature type="chain" id="PRO_1000083444" description="Phosphopentomutase">
    <location>
        <begin position="1"/>
        <end position="392"/>
    </location>
</feature>
<feature type="binding site" evidence="1">
    <location>
        <position position="14"/>
    </location>
    <ligand>
        <name>Mn(2+)</name>
        <dbReference type="ChEBI" id="CHEBI:29035"/>
        <label>1</label>
    </ligand>
</feature>
<feature type="binding site" evidence="1">
    <location>
        <position position="286"/>
    </location>
    <ligand>
        <name>Mn(2+)</name>
        <dbReference type="ChEBI" id="CHEBI:29035"/>
        <label>2</label>
    </ligand>
</feature>
<feature type="binding site" evidence="1">
    <location>
        <position position="291"/>
    </location>
    <ligand>
        <name>Mn(2+)</name>
        <dbReference type="ChEBI" id="CHEBI:29035"/>
        <label>2</label>
    </ligand>
</feature>
<feature type="binding site" evidence="1">
    <location>
        <position position="327"/>
    </location>
    <ligand>
        <name>Mn(2+)</name>
        <dbReference type="ChEBI" id="CHEBI:29035"/>
        <label>1</label>
    </ligand>
</feature>
<feature type="binding site" evidence="1">
    <location>
        <position position="328"/>
    </location>
    <ligand>
        <name>Mn(2+)</name>
        <dbReference type="ChEBI" id="CHEBI:29035"/>
        <label>1</label>
    </ligand>
</feature>
<feature type="binding site" evidence="1">
    <location>
        <position position="339"/>
    </location>
    <ligand>
        <name>Mn(2+)</name>
        <dbReference type="ChEBI" id="CHEBI:29035"/>
        <label>2</label>
    </ligand>
</feature>
<comment type="function">
    <text evidence="1">Isomerase that catalyzes the conversion of deoxy-ribose 1-phosphate (dRib-1-P) and ribose 1-phosphate (Rib-1-P) to deoxy-ribose 5-phosphate (dRib-5-P) and ribose 5-phosphate (Rib-5-P), respectively.</text>
</comment>
<comment type="catalytic activity">
    <reaction evidence="1">
        <text>2-deoxy-alpha-D-ribose 1-phosphate = 2-deoxy-D-ribose 5-phosphate</text>
        <dbReference type="Rhea" id="RHEA:27658"/>
        <dbReference type="ChEBI" id="CHEBI:57259"/>
        <dbReference type="ChEBI" id="CHEBI:62877"/>
        <dbReference type="EC" id="5.4.2.7"/>
    </reaction>
</comment>
<comment type="catalytic activity">
    <reaction evidence="1">
        <text>alpha-D-ribose 1-phosphate = D-ribose 5-phosphate</text>
        <dbReference type="Rhea" id="RHEA:18793"/>
        <dbReference type="ChEBI" id="CHEBI:57720"/>
        <dbReference type="ChEBI" id="CHEBI:78346"/>
        <dbReference type="EC" id="5.4.2.7"/>
    </reaction>
</comment>
<comment type="cofactor">
    <cofactor evidence="1">
        <name>Mn(2+)</name>
        <dbReference type="ChEBI" id="CHEBI:29035"/>
    </cofactor>
    <text evidence="1">Binds 2 manganese ions.</text>
</comment>
<comment type="pathway">
    <text evidence="1">Carbohydrate degradation; 2-deoxy-D-ribose 1-phosphate degradation; D-glyceraldehyde 3-phosphate and acetaldehyde from 2-deoxy-alpha-D-ribose 1-phosphate: step 1/2.</text>
</comment>
<comment type="subcellular location">
    <subcellularLocation>
        <location evidence="1">Cytoplasm</location>
    </subcellularLocation>
</comment>
<comment type="similarity">
    <text evidence="1">Belongs to the phosphopentomutase family.</text>
</comment>
<sequence length="392" mass="43796">MTRPFNRVHLIVMDSVGIGEAPDAADFKDEGSHTLRHTLEGFDQTLPNLEKLGLGNIDKLPVVNAVEQPEAYYTKLSEASVGKDTMTGHWEIMGLNIMQPFKVYPNGFPEELIQQIEEMTGRKVVANKPASGTQIIDEWGEHQMKTGDLIVYTSADPVLQIAAHEDIIPLEELYDICEKVRELTKDPKYLIGRIIARPYVGEPGNFTRTSNRHDYALKPFGKTVLDHLKDGGYDVIAIGKINDIYDGEGVTEAVRTKSNMDGMDQLMKIVKKDFTGISFLNLVDFDALYGHRRDKPGYAQAIKDFDDRLPELFSNLKEDDLVIITADHGNDPTAPGTDHTREYIPVIMYSPKFKGGHALESDTTFSSIGATIADNFNVTLPEFGKSYLKELK</sequence>
<name>DEOB_STAA2</name>
<proteinExistence type="inferred from homology"/>
<gene>
    <name evidence="1" type="primary">deoB</name>
    <name type="ordered locus">SaurJH1_0130</name>
</gene>
<reference key="1">
    <citation type="submission" date="2007-06" db="EMBL/GenBank/DDBJ databases">
        <title>Complete sequence of chromosome of Staphylococcus aureus subsp. aureus JH1.</title>
        <authorList>
            <consortium name="US DOE Joint Genome Institute"/>
            <person name="Copeland A."/>
            <person name="Lucas S."/>
            <person name="Lapidus A."/>
            <person name="Barry K."/>
            <person name="Detter J.C."/>
            <person name="Glavina del Rio T."/>
            <person name="Hammon N."/>
            <person name="Israni S."/>
            <person name="Dalin E."/>
            <person name="Tice H."/>
            <person name="Pitluck S."/>
            <person name="Chain P."/>
            <person name="Malfatti S."/>
            <person name="Shin M."/>
            <person name="Vergez L."/>
            <person name="Schmutz J."/>
            <person name="Larimer F."/>
            <person name="Land M."/>
            <person name="Hauser L."/>
            <person name="Kyrpides N."/>
            <person name="Ivanova N."/>
            <person name="Tomasz A."/>
            <person name="Richardson P."/>
        </authorList>
    </citation>
    <scope>NUCLEOTIDE SEQUENCE [LARGE SCALE GENOMIC DNA]</scope>
    <source>
        <strain>JH1</strain>
    </source>
</reference>